<feature type="chain" id="PRO_1000216144" description="Protein pelota homolog">
    <location>
        <begin position="1"/>
        <end position="357"/>
    </location>
</feature>
<accession>C5A5T8</accession>
<name>PELO_THEGJ</name>
<proteinExistence type="inferred from homology"/>
<reference key="1">
    <citation type="journal article" date="2007" name="Genome Biol.">
        <title>Genome analysis and genome-wide proteomics of Thermococcus gammatolerans, the most radioresistant organism known amongst the Archaea.</title>
        <authorList>
            <person name="Zivanovic Y."/>
            <person name="Armengaud J."/>
            <person name="Lagorce A."/>
            <person name="Leplat C."/>
            <person name="Guerin P."/>
            <person name="Dutertre M."/>
            <person name="Anthouard V."/>
            <person name="Forterre P."/>
            <person name="Wincker P."/>
            <person name="Confalonieri F."/>
        </authorList>
    </citation>
    <scope>NUCLEOTIDE SEQUENCE [LARGE SCALE GENOMIC DNA]</scope>
    <source>
        <strain>DSM 15229 / JCM 11827 / EJ3</strain>
    </source>
</reference>
<comment type="function">
    <text evidence="1">May function in recognizing stalled ribosomes, interact with stem-loop structures in stalled mRNA molecules, and effect endonucleolytic cleavage of the mRNA. May play a role in the release non-functional ribosomes and degradation of damaged mRNAs. Has endoribonuclease activity.</text>
</comment>
<comment type="cofactor">
    <cofactor evidence="1">
        <name>a divalent metal cation</name>
        <dbReference type="ChEBI" id="CHEBI:60240"/>
    </cofactor>
</comment>
<comment type="subunit">
    <text evidence="1">Monomer.</text>
</comment>
<comment type="subcellular location">
    <subcellularLocation>
        <location evidence="1">Cytoplasm</location>
    </subcellularLocation>
</comment>
<comment type="domain">
    <text evidence="1">The N-terminal domain has the RNA-binding Sm fold. It harbors the endoribonuclease activity.</text>
</comment>
<comment type="similarity">
    <text evidence="1">Belongs to the eukaryotic release factor 1 family. Pelota subfamily.</text>
</comment>
<protein>
    <recommendedName>
        <fullName evidence="1">Protein pelota homolog</fullName>
        <ecNumber evidence="1">3.1.-.-</ecNumber>
    </recommendedName>
</protein>
<sequence length="357" mass="40744">MQILEEKPKEGIVKVKAETLDDLWHLYHVIDPGDVVYAKTLRKQAQRSDSLRAEKVEVIPVYLGVKAEKINFHKFANQVRVTGPIVYASRDDVPLGKYHTITIEEGTVVTIQKPRWKEHHIERLKEAIEASKRAKVMIVVIDEGEADIALVREYGVEMVASIRRNLGGKRYNTDRESEEKRFFHDLAKTMAELMEREKIEKAIVAGPGFVKEDFHKFLRENYPELAKKVVIEDTSVTGRTGIYEVIKRGTVDRVYHENRVAKEVQLVEKVLEHVARNTGLATYGLREVEEAVNYGAVETLLVLDELLKGEHRERIEELMDAVRYARGEVVIVSSEHEGGEKLKALGGLAALLRFRVK</sequence>
<evidence type="ECO:0000255" key="1">
    <source>
        <dbReference type="HAMAP-Rule" id="MF_01853"/>
    </source>
</evidence>
<organism>
    <name type="scientific">Thermococcus gammatolerans (strain DSM 15229 / JCM 11827 / EJ3)</name>
    <dbReference type="NCBI Taxonomy" id="593117"/>
    <lineage>
        <taxon>Archaea</taxon>
        <taxon>Methanobacteriati</taxon>
        <taxon>Methanobacteriota</taxon>
        <taxon>Thermococci</taxon>
        <taxon>Thermococcales</taxon>
        <taxon>Thermococcaceae</taxon>
        <taxon>Thermococcus</taxon>
    </lineage>
</organism>
<gene>
    <name evidence="1" type="primary">pelA</name>
    <name type="ordered locus">TGAM_1098</name>
</gene>
<dbReference type="EC" id="3.1.-.-" evidence="1"/>
<dbReference type="EMBL" id="CP001398">
    <property type="protein sequence ID" value="ACS33600.1"/>
    <property type="molecule type" value="Genomic_DNA"/>
</dbReference>
<dbReference type="RefSeq" id="WP_015858713.1">
    <property type="nucleotide sequence ID" value="NC_012804.1"/>
</dbReference>
<dbReference type="SMR" id="C5A5T8"/>
<dbReference type="STRING" id="593117.TGAM_1098"/>
<dbReference type="PaxDb" id="593117-TGAM_1098"/>
<dbReference type="GeneID" id="7986972"/>
<dbReference type="KEGG" id="tga:TGAM_1098"/>
<dbReference type="PATRIC" id="fig|593117.10.peg.1097"/>
<dbReference type="eggNOG" id="arCOG01741">
    <property type="taxonomic scope" value="Archaea"/>
</dbReference>
<dbReference type="HOGENOM" id="CLU_023334_0_0_2"/>
<dbReference type="OrthoDB" id="31300at2157"/>
<dbReference type="Proteomes" id="UP000001488">
    <property type="component" value="Chromosome"/>
</dbReference>
<dbReference type="GO" id="GO:0005737">
    <property type="term" value="C:cytoplasm"/>
    <property type="evidence" value="ECO:0007669"/>
    <property type="project" value="UniProtKB-SubCell"/>
</dbReference>
<dbReference type="GO" id="GO:0004519">
    <property type="term" value="F:endonuclease activity"/>
    <property type="evidence" value="ECO:0007669"/>
    <property type="project" value="UniProtKB-UniRule"/>
</dbReference>
<dbReference type="GO" id="GO:0046872">
    <property type="term" value="F:metal ion binding"/>
    <property type="evidence" value="ECO:0007669"/>
    <property type="project" value="UniProtKB-UniRule"/>
</dbReference>
<dbReference type="GO" id="GO:0070651">
    <property type="term" value="P:nonfunctional rRNA decay"/>
    <property type="evidence" value="ECO:0007669"/>
    <property type="project" value="TreeGrafter"/>
</dbReference>
<dbReference type="GO" id="GO:0070966">
    <property type="term" value="P:nuclear-transcribed mRNA catabolic process, no-go decay"/>
    <property type="evidence" value="ECO:0007669"/>
    <property type="project" value="InterPro"/>
</dbReference>
<dbReference type="GO" id="GO:0070481">
    <property type="term" value="P:nuclear-transcribed mRNA catabolic process, non-stop decay"/>
    <property type="evidence" value="ECO:0007669"/>
    <property type="project" value="InterPro"/>
</dbReference>
<dbReference type="GO" id="GO:0032790">
    <property type="term" value="P:ribosome disassembly"/>
    <property type="evidence" value="ECO:0007669"/>
    <property type="project" value="TreeGrafter"/>
</dbReference>
<dbReference type="GO" id="GO:0071025">
    <property type="term" value="P:RNA surveillance"/>
    <property type="evidence" value="ECO:0007669"/>
    <property type="project" value="InterPro"/>
</dbReference>
<dbReference type="FunFam" id="2.30.30.870:FF:000002">
    <property type="entry name" value="Protein pelota homolog"/>
    <property type="match status" value="1"/>
</dbReference>
<dbReference type="FunFam" id="3.30.420.60:FF:000005">
    <property type="entry name" value="Protein pelota homolog"/>
    <property type="match status" value="1"/>
</dbReference>
<dbReference type="Gene3D" id="3.30.1330.30">
    <property type="match status" value="1"/>
</dbReference>
<dbReference type="Gene3D" id="3.30.420.60">
    <property type="entry name" value="eRF1 domain 2"/>
    <property type="match status" value="1"/>
</dbReference>
<dbReference type="Gene3D" id="2.30.30.870">
    <property type="entry name" value="Pelota, domain A"/>
    <property type="match status" value="1"/>
</dbReference>
<dbReference type="HAMAP" id="MF_01853">
    <property type="entry name" value="PelO"/>
    <property type="match status" value="1"/>
</dbReference>
<dbReference type="InterPro" id="IPR042226">
    <property type="entry name" value="eFR1_2_sf"/>
</dbReference>
<dbReference type="InterPro" id="IPR005140">
    <property type="entry name" value="eRF1_1_Pelota"/>
</dbReference>
<dbReference type="InterPro" id="IPR005141">
    <property type="entry name" value="eRF1_2"/>
</dbReference>
<dbReference type="InterPro" id="IPR005142">
    <property type="entry name" value="eRF1_3"/>
</dbReference>
<dbReference type="InterPro" id="IPR038069">
    <property type="entry name" value="Pelota/DOM34_N"/>
</dbReference>
<dbReference type="InterPro" id="IPR023521">
    <property type="entry name" value="Pelota_arc"/>
</dbReference>
<dbReference type="InterPro" id="IPR029064">
    <property type="entry name" value="Ribosomal_eL30-like_sf"/>
</dbReference>
<dbReference type="InterPro" id="IPR004405">
    <property type="entry name" value="Transl-rel_pelota"/>
</dbReference>
<dbReference type="NCBIfam" id="TIGR00111">
    <property type="entry name" value="pelota"/>
    <property type="match status" value="1"/>
</dbReference>
<dbReference type="PANTHER" id="PTHR10853">
    <property type="entry name" value="PELOTA"/>
    <property type="match status" value="1"/>
</dbReference>
<dbReference type="PANTHER" id="PTHR10853:SF0">
    <property type="entry name" value="PROTEIN PELOTA HOMOLOG"/>
    <property type="match status" value="1"/>
</dbReference>
<dbReference type="Pfam" id="PF03463">
    <property type="entry name" value="eRF1_1"/>
    <property type="match status" value="1"/>
</dbReference>
<dbReference type="Pfam" id="PF03464">
    <property type="entry name" value="eRF1_2"/>
    <property type="match status" value="1"/>
</dbReference>
<dbReference type="Pfam" id="PF03465">
    <property type="entry name" value="eRF1_3"/>
    <property type="match status" value="1"/>
</dbReference>
<dbReference type="SMART" id="SM01194">
    <property type="entry name" value="eRF1_1"/>
    <property type="match status" value="1"/>
</dbReference>
<dbReference type="SUPFAM" id="SSF159065">
    <property type="entry name" value="Dom34/Pelota N-terminal domain-like"/>
    <property type="match status" value="1"/>
</dbReference>
<dbReference type="SUPFAM" id="SSF55315">
    <property type="entry name" value="L30e-like"/>
    <property type="match status" value="1"/>
</dbReference>
<dbReference type="SUPFAM" id="SSF53137">
    <property type="entry name" value="Translational machinery components"/>
    <property type="match status" value="1"/>
</dbReference>
<keyword id="KW-0963">Cytoplasm</keyword>
<keyword id="KW-0255">Endonuclease</keyword>
<keyword id="KW-0378">Hydrolase</keyword>
<keyword id="KW-0479">Metal-binding</keyword>
<keyword id="KW-0540">Nuclease</keyword>
<keyword id="KW-1185">Reference proteome</keyword>